<organism>
    <name type="scientific">Methanosarcina acetivorans (strain ATCC 35395 / DSM 2834 / JCM 12185 / C2A)</name>
    <dbReference type="NCBI Taxonomy" id="188937"/>
    <lineage>
        <taxon>Archaea</taxon>
        <taxon>Methanobacteriati</taxon>
        <taxon>Methanobacteriota</taxon>
        <taxon>Stenosarchaea group</taxon>
        <taxon>Methanomicrobia</taxon>
        <taxon>Methanosarcinales</taxon>
        <taxon>Methanosarcinaceae</taxon>
        <taxon>Methanosarcina</taxon>
    </lineage>
</organism>
<evidence type="ECO:0000255" key="1">
    <source>
        <dbReference type="HAMAP-Rule" id="MF_00478"/>
    </source>
</evidence>
<evidence type="ECO:0000269" key="2">
    <source>
    </source>
</evidence>
<evidence type="ECO:0000305" key="3"/>
<evidence type="ECO:0000305" key="4">
    <source>
    </source>
</evidence>
<evidence type="ECO:0000312" key="5">
    <source>
        <dbReference type="EMBL" id="AAM04104.1"/>
    </source>
</evidence>
<gene>
    <name evidence="1" type="primary">rnfE</name>
    <name evidence="5" type="ordered locus">MA_0662</name>
</gene>
<name>RNFE_METAC</name>
<comment type="function">
    <text evidence="2">Part of a membrane-bound complex that couples electron transfer with translocation of ions across the membrane. Catalyzes Na(+) transport, most probably coupled to electron transfer from reduced ferredoxin to methanophenazine and heterodisulfide reductase. Involved in heterodisulfide reduction during methanogenesis from acetate.</text>
</comment>
<comment type="subunit">
    <text evidence="1 4">The Rnf complex is probably composed of eight subunits, including RnfA, RnfB, RnfC, RnfD, RnfE and RnfG.</text>
</comment>
<comment type="subcellular location">
    <subcellularLocation>
        <location evidence="1">Cell membrane</location>
        <topology evidence="1">Multi-pass membrane protein</topology>
    </subcellularLocation>
</comment>
<comment type="disruption phenotype">
    <text evidence="2">Deletion of the rnf operon abolishes growth on acetate and ferredoxin:heterodisulfide oxidoreductase-coupled Na(+) transport.</text>
</comment>
<comment type="similarity">
    <text evidence="1">Belongs to the NqrDE/RnfAE family.</text>
</comment>
<protein>
    <recommendedName>
        <fullName evidence="1 3">Ion-translocating oxidoreductase complex subunit E</fullName>
        <ecNumber evidence="1 3">7.2.1.-</ecNumber>
    </recommendedName>
    <alternativeName>
        <fullName evidence="1 3">Rnf electron transport complex subunit E</fullName>
    </alternativeName>
</protein>
<sequence>MYPHRRADMNPISEFIRGITKDNPTFGLVLGLCPTLAVTTSVENGIGMAMGTLFVLVGSNMMVSAIRKGIPGTVRLPVEIIVIATFVTIVDMVMEAFTPDLYTSLGVFIPLIVVNCIVIGRAEAYALKNGVFYSIIDALGEGTGFLLVLILIGGIRELLGTGIIDPFGMTLINLSGVINPAMFMTMSPGAFLTIAVLMTIVNYRRQQKAAKGG</sequence>
<dbReference type="EC" id="7.2.1.-" evidence="1 3"/>
<dbReference type="EMBL" id="AE010299">
    <property type="protein sequence ID" value="AAM04104.1"/>
    <property type="molecule type" value="Genomic_DNA"/>
</dbReference>
<dbReference type="SMR" id="Q8TSY1"/>
<dbReference type="STRING" id="188937.MA_0662"/>
<dbReference type="TCDB" id="3.D.6.1.3">
    <property type="family name" value="the ion (h(+) or na(+))-translocating nadh:ferredoxin oxidoreductase (nfo or rnf) family"/>
</dbReference>
<dbReference type="EnsemblBacteria" id="AAM04104">
    <property type="protein sequence ID" value="AAM04104"/>
    <property type="gene ID" value="MA_0662"/>
</dbReference>
<dbReference type="KEGG" id="mac:MA_0662"/>
<dbReference type="HOGENOM" id="CLU_046659_1_1_2"/>
<dbReference type="InParanoid" id="Q8TSY1"/>
<dbReference type="PhylomeDB" id="Q8TSY1"/>
<dbReference type="BRENDA" id="7.2.1.2">
    <property type="organism ID" value="7224"/>
</dbReference>
<dbReference type="Proteomes" id="UP000002487">
    <property type="component" value="Chromosome"/>
</dbReference>
<dbReference type="GO" id="GO:0005886">
    <property type="term" value="C:plasma membrane"/>
    <property type="evidence" value="ECO:0000318"/>
    <property type="project" value="GO_Central"/>
</dbReference>
<dbReference type="GO" id="GO:0022900">
    <property type="term" value="P:electron transport chain"/>
    <property type="evidence" value="ECO:0007669"/>
    <property type="project" value="UniProtKB-UniRule"/>
</dbReference>
<dbReference type="HAMAP" id="MF_00478">
    <property type="entry name" value="RsxE_RnfE"/>
    <property type="match status" value="1"/>
</dbReference>
<dbReference type="InterPro" id="IPR003667">
    <property type="entry name" value="NqrDE/RnfAE"/>
</dbReference>
<dbReference type="InterPro" id="IPR010968">
    <property type="entry name" value="RnfE"/>
</dbReference>
<dbReference type="NCBIfam" id="NF009070">
    <property type="entry name" value="PRK12405.1"/>
    <property type="match status" value="1"/>
</dbReference>
<dbReference type="NCBIfam" id="TIGR01948">
    <property type="entry name" value="rnfE"/>
    <property type="match status" value="1"/>
</dbReference>
<dbReference type="NCBIfam" id="NF041839">
    <property type="entry name" value="rnfE_Methano"/>
    <property type="match status" value="1"/>
</dbReference>
<dbReference type="PANTHER" id="PTHR30586">
    <property type="entry name" value="ELECTRON TRANSPORT COMPLEX PROTEIN RNFE"/>
    <property type="match status" value="1"/>
</dbReference>
<dbReference type="PANTHER" id="PTHR30586:SF0">
    <property type="entry name" value="ION-TRANSLOCATING OXIDOREDUCTASE COMPLEX SUBUNIT E"/>
    <property type="match status" value="1"/>
</dbReference>
<dbReference type="Pfam" id="PF02508">
    <property type="entry name" value="Rnf-Nqr"/>
    <property type="match status" value="1"/>
</dbReference>
<dbReference type="PIRSF" id="PIRSF006102">
    <property type="entry name" value="NQR_DE"/>
    <property type="match status" value="1"/>
</dbReference>
<proteinExistence type="evidence at protein level"/>
<accession>Q8TSY1</accession>
<feature type="chain" id="PRO_0000443495" description="Ion-translocating oxidoreductase complex subunit E">
    <location>
        <begin position="1"/>
        <end position="213"/>
    </location>
</feature>
<feature type="transmembrane region" description="Helical" evidence="1">
    <location>
        <begin position="25"/>
        <end position="45"/>
    </location>
</feature>
<feature type="transmembrane region" description="Helical" evidence="1">
    <location>
        <begin position="46"/>
        <end position="66"/>
    </location>
</feature>
<feature type="transmembrane region" description="Helical" evidence="1">
    <location>
        <begin position="77"/>
        <end position="97"/>
    </location>
</feature>
<feature type="transmembrane region" description="Helical" evidence="1">
    <location>
        <begin position="100"/>
        <end position="120"/>
    </location>
</feature>
<feature type="transmembrane region" description="Helical" evidence="1">
    <location>
        <begin position="135"/>
        <end position="155"/>
    </location>
</feature>
<feature type="transmembrane region" description="Helical" evidence="1">
    <location>
        <begin position="181"/>
        <end position="201"/>
    </location>
</feature>
<keyword id="KW-1003">Cell membrane</keyword>
<keyword id="KW-0249">Electron transport</keyword>
<keyword id="KW-0472">Membrane</keyword>
<keyword id="KW-1185">Reference proteome</keyword>
<keyword id="KW-1278">Translocase</keyword>
<keyword id="KW-0812">Transmembrane</keyword>
<keyword id="KW-1133">Transmembrane helix</keyword>
<keyword id="KW-0813">Transport</keyword>
<reference key="1">
    <citation type="journal article" date="2002" name="Genome Res.">
        <title>The genome of Methanosarcina acetivorans reveals extensive metabolic and physiological diversity.</title>
        <authorList>
            <person name="Galagan J.E."/>
            <person name="Nusbaum C."/>
            <person name="Roy A."/>
            <person name="Endrizzi M.G."/>
            <person name="Macdonald P."/>
            <person name="FitzHugh W."/>
            <person name="Calvo S."/>
            <person name="Engels R."/>
            <person name="Smirnov S."/>
            <person name="Atnoor D."/>
            <person name="Brown A."/>
            <person name="Allen N."/>
            <person name="Naylor J."/>
            <person name="Stange-Thomann N."/>
            <person name="DeArellano K."/>
            <person name="Johnson R."/>
            <person name="Linton L."/>
            <person name="McEwan P."/>
            <person name="McKernan K."/>
            <person name="Talamas J."/>
            <person name="Tirrell A."/>
            <person name="Ye W."/>
            <person name="Zimmer A."/>
            <person name="Barber R.D."/>
            <person name="Cann I."/>
            <person name="Graham D.E."/>
            <person name="Grahame D.A."/>
            <person name="Guss A.M."/>
            <person name="Hedderich R."/>
            <person name="Ingram-Smith C."/>
            <person name="Kuettner H.C."/>
            <person name="Krzycki J.A."/>
            <person name="Leigh J.A."/>
            <person name="Li W."/>
            <person name="Liu J."/>
            <person name="Mukhopadhyay B."/>
            <person name="Reeve J.N."/>
            <person name="Smith K."/>
            <person name="Springer T.A."/>
            <person name="Umayam L.A."/>
            <person name="White O."/>
            <person name="White R.H."/>
            <person name="de Macario E.C."/>
            <person name="Ferry J.G."/>
            <person name="Jarrell K.F."/>
            <person name="Jing H."/>
            <person name="Macario A.J.L."/>
            <person name="Paulsen I.T."/>
            <person name="Pritchett M."/>
            <person name="Sowers K.R."/>
            <person name="Swanson R.V."/>
            <person name="Zinder S.H."/>
            <person name="Lander E."/>
            <person name="Metcalf W.W."/>
            <person name="Birren B."/>
        </authorList>
    </citation>
    <scope>NUCLEOTIDE SEQUENCE [LARGE SCALE GENOMIC DNA]</scope>
    <source>
        <strain>ATCC 35395 / DSM 2834 / JCM 12185 / C2A</strain>
    </source>
</reference>
<reference key="2">
    <citation type="journal article" date="2012" name="FEBS J.">
        <title>Electron transport during aceticlastic methanogenesis by Methanosarcina acetivorans involves a sodium-translocating Rnf complex.</title>
        <authorList>
            <person name="Schlegel K."/>
            <person name="Welte C."/>
            <person name="Deppenmeier U."/>
            <person name="Mueller V."/>
        </authorList>
    </citation>
    <scope>FUNCTION</scope>
    <scope>SUBUNIT</scope>
    <scope>DISRUPTION PHENOTYPE</scope>
    <source>
        <strain>ATCC 35395 / DSM 2834 / JCM 12185 / C2A</strain>
    </source>
</reference>